<comment type="subcellular location">
    <subcellularLocation>
        <location evidence="1">Cell membrane</location>
        <topology evidence="1">Multi-pass membrane protein</topology>
    </subcellularLocation>
</comment>
<comment type="similarity">
    <text evidence="1">Belongs to the UPF0756 family.</text>
</comment>
<dbReference type="EMBL" id="BX571868">
    <property type="protein sequence ID" value="CAE15100.1"/>
    <property type="molecule type" value="Genomic_DNA"/>
</dbReference>
<dbReference type="RefSeq" id="WP_011146947.1">
    <property type="nucleotide sequence ID" value="NC_005126.1"/>
</dbReference>
<dbReference type="SMR" id="Q7N3J0"/>
<dbReference type="STRING" id="243265.plu2726"/>
<dbReference type="KEGG" id="plu:plu2726"/>
<dbReference type="eggNOG" id="COG2707">
    <property type="taxonomic scope" value="Bacteria"/>
</dbReference>
<dbReference type="HOGENOM" id="CLU_125889_0_0_6"/>
<dbReference type="OrthoDB" id="80306at2"/>
<dbReference type="Proteomes" id="UP000002514">
    <property type="component" value="Chromosome"/>
</dbReference>
<dbReference type="GO" id="GO:0005886">
    <property type="term" value="C:plasma membrane"/>
    <property type="evidence" value="ECO:0007669"/>
    <property type="project" value="UniProtKB-SubCell"/>
</dbReference>
<dbReference type="HAMAP" id="MF_01874">
    <property type="entry name" value="UPF0756"/>
    <property type="match status" value="1"/>
</dbReference>
<dbReference type="InterPro" id="IPR007382">
    <property type="entry name" value="UPF0756_TM"/>
</dbReference>
<dbReference type="PANTHER" id="PTHR38452">
    <property type="entry name" value="UPF0756 MEMBRANE PROTEIN YEAL"/>
    <property type="match status" value="1"/>
</dbReference>
<dbReference type="PANTHER" id="PTHR38452:SF1">
    <property type="entry name" value="UPF0756 MEMBRANE PROTEIN YEAL"/>
    <property type="match status" value="1"/>
</dbReference>
<dbReference type="Pfam" id="PF04284">
    <property type="entry name" value="DUF441"/>
    <property type="match status" value="1"/>
</dbReference>
<feature type="chain" id="PRO_0000388919" description="UPF0756 membrane protein plu2726">
    <location>
        <begin position="1"/>
        <end position="150"/>
    </location>
</feature>
<feature type="transmembrane region" description="Helical" evidence="1">
    <location>
        <begin position="8"/>
        <end position="28"/>
    </location>
</feature>
<feature type="transmembrane region" description="Helical" evidence="1">
    <location>
        <begin position="51"/>
        <end position="71"/>
    </location>
</feature>
<feature type="transmembrane region" description="Helical" evidence="1">
    <location>
        <begin position="88"/>
        <end position="108"/>
    </location>
</feature>
<feature type="transmembrane region" description="Helical" evidence="1">
    <location>
        <begin position="123"/>
        <end position="143"/>
    </location>
</feature>
<accession>Q7N3J0</accession>
<name>Y2726_PHOLL</name>
<sequence length="150" mass="15672">MSHLDPTLLVLLVLAALGIISHNMTVTLAMLLLLVIRITPLNHFFPWVEKYGLTIGVLILTVGVMAPIASGKITVQAVLNSFMNWKSLLAIVIGVLVSWLGSRGVSLMSNQPSTVAGLLVGTVLGVALFKGVPVGPLIAAGILSLLIGKS</sequence>
<protein>
    <recommendedName>
        <fullName evidence="1">UPF0756 membrane protein plu2726</fullName>
    </recommendedName>
</protein>
<proteinExistence type="inferred from homology"/>
<keyword id="KW-1003">Cell membrane</keyword>
<keyword id="KW-0472">Membrane</keyword>
<keyword id="KW-1185">Reference proteome</keyword>
<keyword id="KW-0812">Transmembrane</keyword>
<keyword id="KW-1133">Transmembrane helix</keyword>
<gene>
    <name type="ordered locus">plu2726</name>
</gene>
<reference key="1">
    <citation type="journal article" date="2003" name="Nat. Biotechnol.">
        <title>The genome sequence of the entomopathogenic bacterium Photorhabdus luminescens.</title>
        <authorList>
            <person name="Duchaud E."/>
            <person name="Rusniok C."/>
            <person name="Frangeul L."/>
            <person name="Buchrieser C."/>
            <person name="Givaudan A."/>
            <person name="Taourit S."/>
            <person name="Bocs S."/>
            <person name="Boursaux-Eude C."/>
            <person name="Chandler M."/>
            <person name="Charles J.-F."/>
            <person name="Dassa E."/>
            <person name="Derose R."/>
            <person name="Derzelle S."/>
            <person name="Freyssinet G."/>
            <person name="Gaudriault S."/>
            <person name="Medigue C."/>
            <person name="Lanois A."/>
            <person name="Powell K."/>
            <person name="Siguier P."/>
            <person name="Vincent R."/>
            <person name="Wingate V."/>
            <person name="Zouine M."/>
            <person name="Glaser P."/>
            <person name="Boemare N."/>
            <person name="Danchin A."/>
            <person name="Kunst F."/>
        </authorList>
    </citation>
    <scope>NUCLEOTIDE SEQUENCE [LARGE SCALE GENOMIC DNA]</scope>
    <source>
        <strain>DSM 15139 / CIP 105565 / TT01</strain>
    </source>
</reference>
<organism>
    <name type="scientific">Photorhabdus laumondii subsp. laumondii (strain DSM 15139 / CIP 105565 / TT01)</name>
    <name type="common">Photorhabdus luminescens subsp. laumondii</name>
    <dbReference type="NCBI Taxonomy" id="243265"/>
    <lineage>
        <taxon>Bacteria</taxon>
        <taxon>Pseudomonadati</taxon>
        <taxon>Pseudomonadota</taxon>
        <taxon>Gammaproteobacteria</taxon>
        <taxon>Enterobacterales</taxon>
        <taxon>Morganellaceae</taxon>
        <taxon>Photorhabdus</taxon>
    </lineage>
</organism>
<evidence type="ECO:0000255" key="1">
    <source>
        <dbReference type="HAMAP-Rule" id="MF_01874"/>
    </source>
</evidence>